<keyword id="KW-0903">Direct protein sequencing</keyword>
<keyword id="KW-0873">Pyrrolidone carboxylic acid</keyword>
<keyword id="KW-0964">Secreted</keyword>
<keyword id="KW-0838">Vasoactive</keyword>
<protein>
    <recommendedName>
        <fullName>Neurotensin</fullName>
        <shortName>NT</shortName>
    </recommendedName>
</protein>
<evidence type="ECO:0000250" key="1">
    <source>
        <dbReference type="UniProtKB" id="P30990"/>
    </source>
</evidence>
<evidence type="ECO:0000269" key="2">
    <source>
    </source>
</evidence>
<evidence type="ECO:0000305" key="3"/>
<accession>P31745</accession>
<feature type="peptide" id="PRO_0000044068" description="Neurotensin">
    <location>
        <begin position="1"/>
        <end position="13"/>
    </location>
</feature>
<feature type="site" description="Cleavage; by MME" evidence="1">
    <location>
        <begin position="10"/>
        <end position="11"/>
    </location>
</feature>
<feature type="site" description="Cleavage; by ACE and MME" evidence="1">
    <location>
        <begin position="11"/>
        <end position="12"/>
    </location>
</feature>
<feature type="modified residue" description="Pyrrolidone carboxylic acid" evidence="2">
    <location>
        <position position="1"/>
    </location>
</feature>
<proteinExistence type="evidence at protein level"/>
<organism>
    <name type="scientific">Trichosurus vulpecula</name>
    <name type="common">Brush-tailed possum</name>
    <dbReference type="NCBI Taxonomy" id="9337"/>
    <lineage>
        <taxon>Eukaryota</taxon>
        <taxon>Metazoa</taxon>
        <taxon>Chordata</taxon>
        <taxon>Craniata</taxon>
        <taxon>Vertebrata</taxon>
        <taxon>Euteleostomi</taxon>
        <taxon>Mammalia</taxon>
        <taxon>Metatheria</taxon>
        <taxon>Diprotodontia</taxon>
        <taxon>Phalangeridae</taxon>
        <taxon>Trichosurus</taxon>
    </lineage>
</organism>
<reference key="1">
    <citation type="journal article" date="1991" name="Regul. Pept.">
        <title>Marsupial possum neurotensin: a unique mammalian regulatory peptide exhibiting structural homology to the avian analogue.</title>
        <authorList>
            <person name="Shaw C."/>
            <person name="Murphy R."/>
            <person name="Thim L."/>
            <person name="Furness J.B."/>
            <person name="Buchanan K.D."/>
        </authorList>
    </citation>
    <scope>PROTEIN SEQUENCE</scope>
    <scope>PYROGLUTAMATE FORMATION AT GLN-1</scope>
    <source>
        <tissue>Small intestine</tissue>
    </source>
</reference>
<name>NEUT_TRIVU</name>
<comment type="function">
    <text>Smooth muscle-contracting peptide.</text>
</comment>
<comment type="subunit">
    <text evidence="1">Interacts with NTSR1. Interacts with SORT1. Interacts with SORL1.</text>
</comment>
<comment type="subcellular location">
    <subcellularLocation>
        <location>Secreted</location>
    </subcellularLocation>
</comment>
<comment type="PTM">
    <molecule>Neurotensin</molecule>
    <text evidence="1">Neurotensin is cleaved and degraded by Angiotensin-converting enzyme (ACE) and neprilysin (MME).</text>
</comment>
<comment type="similarity">
    <text evidence="3">Belongs to the neurotensin family.</text>
</comment>
<dbReference type="PIR" id="A60064">
    <property type="entry name" value="UNOPBT"/>
</dbReference>
<dbReference type="GO" id="GO:0005576">
    <property type="term" value="C:extracellular region"/>
    <property type="evidence" value="ECO:0007669"/>
    <property type="project" value="UniProtKB-SubCell"/>
</dbReference>
<dbReference type="GO" id="GO:0097746">
    <property type="term" value="P:blood vessel diameter maintenance"/>
    <property type="evidence" value="ECO:0007669"/>
    <property type="project" value="UniProtKB-KW"/>
</dbReference>
<gene>
    <name type="primary">NTS</name>
</gene>
<sequence length="13" mass="1610">QLHVNKARRVYIL</sequence>